<accession>Q5HVB3</accession>
<reference key="1">
    <citation type="journal article" date="2005" name="PLoS Biol.">
        <title>Major structural differences and novel potential virulence mechanisms from the genomes of multiple Campylobacter species.</title>
        <authorList>
            <person name="Fouts D.E."/>
            <person name="Mongodin E.F."/>
            <person name="Mandrell R.E."/>
            <person name="Miller W.G."/>
            <person name="Rasko D.A."/>
            <person name="Ravel J."/>
            <person name="Brinkac L.M."/>
            <person name="DeBoy R.T."/>
            <person name="Parker C.T."/>
            <person name="Daugherty S.C."/>
            <person name="Dodson R.J."/>
            <person name="Durkin A.S."/>
            <person name="Madupu R."/>
            <person name="Sullivan S.A."/>
            <person name="Shetty J.U."/>
            <person name="Ayodeji M.A."/>
            <person name="Shvartsbeyn A."/>
            <person name="Schatz M.C."/>
            <person name="Badger J.H."/>
            <person name="Fraser C.M."/>
            <person name="Nelson K.E."/>
        </authorList>
    </citation>
    <scope>NUCLEOTIDE SEQUENCE [LARGE SCALE GENOMIC DNA]</scope>
    <source>
        <strain>RM1221</strain>
    </source>
</reference>
<evidence type="ECO:0000255" key="1">
    <source>
        <dbReference type="HAMAP-Rule" id="MF_00367"/>
    </source>
</evidence>
<evidence type="ECO:0000255" key="2">
    <source>
        <dbReference type="PROSITE-ProRule" id="PRU01050"/>
    </source>
</evidence>
<comment type="function">
    <text evidence="1">An essential GTPase that binds both GDP and GTP, with rapid nucleotide exchange. Plays a role in 16S rRNA processing and 30S ribosomal subunit biogenesis and possibly also in cell cycle regulation and energy metabolism.</text>
</comment>
<comment type="subunit">
    <text evidence="1">Monomer.</text>
</comment>
<comment type="subcellular location">
    <subcellularLocation>
        <location>Cytoplasm</location>
    </subcellularLocation>
    <subcellularLocation>
        <location evidence="1">Cell inner membrane</location>
        <topology evidence="1">Peripheral membrane protein</topology>
    </subcellularLocation>
</comment>
<comment type="similarity">
    <text evidence="1 2">Belongs to the TRAFAC class TrmE-Era-EngA-EngB-Septin-like GTPase superfamily. Era GTPase family.</text>
</comment>
<organism>
    <name type="scientific">Campylobacter jejuni (strain RM1221)</name>
    <dbReference type="NCBI Taxonomy" id="195099"/>
    <lineage>
        <taxon>Bacteria</taxon>
        <taxon>Pseudomonadati</taxon>
        <taxon>Campylobacterota</taxon>
        <taxon>Epsilonproteobacteria</taxon>
        <taxon>Campylobacterales</taxon>
        <taxon>Campylobacteraceae</taxon>
        <taxon>Campylobacter</taxon>
    </lineage>
</organism>
<feature type="chain" id="PRO_1000079669" description="GTPase Era">
    <location>
        <begin position="1"/>
        <end position="291"/>
    </location>
</feature>
<feature type="domain" description="Era-type G" evidence="2">
    <location>
        <begin position="2"/>
        <end position="167"/>
    </location>
</feature>
<feature type="domain" description="KH type-2" evidence="1">
    <location>
        <begin position="186"/>
        <end position="274"/>
    </location>
</feature>
<feature type="region of interest" description="G1" evidence="2">
    <location>
        <begin position="10"/>
        <end position="17"/>
    </location>
</feature>
<feature type="region of interest" description="G2" evidence="2">
    <location>
        <begin position="36"/>
        <end position="40"/>
    </location>
</feature>
<feature type="region of interest" description="G3" evidence="2">
    <location>
        <begin position="57"/>
        <end position="60"/>
    </location>
</feature>
<feature type="region of interest" description="G4" evidence="2">
    <location>
        <begin position="116"/>
        <end position="119"/>
    </location>
</feature>
<feature type="region of interest" description="G5" evidence="2">
    <location>
        <begin position="146"/>
        <end position="148"/>
    </location>
</feature>
<feature type="binding site" evidence="1">
    <location>
        <begin position="10"/>
        <end position="17"/>
    </location>
    <ligand>
        <name>GTP</name>
        <dbReference type="ChEBI" id="CHEBI:37565"/>
    </ligand>
</feature>
<feature type="binding site" evidence="1">
    <location>
        <begin position="57"/>
        <end position="61"/>
    </location>
    <ligand>
        <name>GTP</name>
        <dbReference type="ChEBI" id="CHEBI:37565"/>
    </ligand>
</feature>
<feature type="binding site" evidence="1">
    <location>
        <begin position="116"/>
        <end position="119"/>
    </location>
    <ligand>
        <name>GTP</name>
        <dbReference type="ChEBI" id="CHEBI:37565"/>
    </ligand>
</feature>
<name>ERA_CAMJR</name>
<gene>
    <name evidence="1" type="primary">era</name>
    <name type="ordered locus">CJE0763</name>
</gene>
<keyword id="KW-0997">Cell inner membrane</keyword>
<keyword id="KW-1003">Cell membrane</keyword>
<keyword id="KW-0963">Cytoplasm</keyword>
<keyword id="KW-0342">GTP-binding</keyword>
<keyword id="KW-0472">Membrane</keyword>
<keyword id="KW-0547">Nucleotide-binding</keyword>
<keyword id="KW-0690">Ribosome biogenesis</keyword>
<keyword id="KW-0694">RNA-binding</keyword>
<keyword id="KW-0699">rRNA-binding</keyword>
<proteinExistence type="inferred from homology"/>
<sequence length="291" mass="33117">MKSGFVSIIGRTNAGKSTLINSLLEEKIALVSHKQNATRRKIKAIVMHEKNQIIFIDTPGLHESGATLNQLLVQSAIKSMGDCDVILFVASVFDSTKDYENFLSLNPQVPHIIALNKVDLTDNATLLKKLSEYAKFSQHFKAIIPYSSKKKSYKKGLLDEIVKYLDEHEYFYNPEFLSASSEKELYRDFILESIYENLSDELPYSSEVLINRTKDTPNLLILEANIITDTNSHKGMLIGKEGATLKRIGKDARFKISKLAQKKVLLKLFVTVKKNWQKDEEFLKKLLNDEN</sequence>
<protein>
    <recommendedName>
        <fullName evidence="1">GTPase Era</fullName>
    </recommendedName>
</protein>
<dbReference type="EMBL" id="CP000025">
    <property type="protein sequence ID" value="AAW34554.1"/>
    <property type="molecule type" value="Genomic_DNA"/>
</dbReference>
<dbReference type="RefSeq" id="WP_002888740.1">
    <property type="nucleotide sequence ID" value="NC_003912.7"/>
</dbReference>
<dbReference type="SMR" id="Q5HVB3"/>
<dbReference type="KEGG" id="cjr:CJE0763"/>
<dbReference type="HOGENOM" id="CLU_038009_1_0_7"/>
<dbReference type="GO" id="GO:0005829">
    <property type="term" value="C:cytosol"/>
    <property type="evidence" value="ECO:0007669"/>
    <property type="project" value="TreeGrafter"/>
</dbReference>
<dbReference type="GO" id="GO:0005886">
    <property type="term" value="C:plasma membrane"/>
    <property type="evidence" value="ECO:0007669"/>
    <property type="project" value="UniProtKB-SubCell"/>
</dbReference>
<dbReference type="GO" id="GO:0005525">
    <property type="term" value="F:GTP binding"/>
    <property type="evidence" value="ECO:0007669"/>
    <property type="project" value="UniProtKB-UniRule"/>
</dbReference>
<dbReference type="GO" id="GO:0003924">
    <property type="term" value="F:GTPase activity"/>
    <property type="evidence" value="ECO:0007669"/>
    <property type="project" value="UniProtKB-UniRule"/>
</dbReference>
<dbReference type="GO" id="GO:0043024">
    <property type="term" value="F:ribosomal small subunit binding"/>
    <property type="evidence" value="ECO:0007669"/>
    <property type="project" value="TreeGrafter"/>
</dbReference>
<dbReference type="GO" id="GO:0070181">
    <property type="term" value="F:small ribosomal subunit rRNA binding"/>
    <property type="evidence" value="ECO:0007669"/>
    <property type="project" value="UniProtKB-UniRule"/>
</dbReference>
<dbReference type="GO" id="GO:0000028">
    <property type="term" value="P:ribosomal small subunit assembly"/>
    <property type="evidence" value="ECO:0007669"/>
    <property type="project" value="TreeGrafter"/>
</dbReference>
<dbReference type="CDD" id="cd04163">
    <property type="entry name" value="Era"/>
    <property type="match status" value="1"/>
</dbReference>
<dbReference type="CDD" id="cd22534">
    <property type="entry name" value="KH-II_Era"/>
    <property type="match status" value="1"/>
</dbReference>
<dbReference type="Gene3D" id="3.30.300.20">
    <property type="match status" value="1"/>
</dbReference>
<dbReference type="Gene3D" id="3.40.50.300">
    <property type="entry name" value="P-loop containing nucleotide triphosphate hydrolases"/>
    <property type="match status" value="1"/>
</dbReference>
<dbReference type="HAMAP" id="MF_00367">
    <property type="entry name" value="GTPase_Era"/>
    <property type="match status" value="1"/>
</dbReference>
<dbReference type="InterPro" id="IPR030388">
    <property type="entry name" value="G_ERA_dom"/>
</dbReference>
<dbReference type="InterPro" id="IPR006073">
    <property type="entry name" value="GTP-bd"/>
</dbReference>
<dbReference type="InterPro" id="IPR005662">
    <property type="entry name" value="GTPase_Era-like"/>
</dbReference>
<dbReference type="InterPro" id="IPR015946">
    <property type="entry name" value="KH_dom-like_a/b"/>
</dbReference>
<dbReference type="InterPro" id="IPR004044">
    <property type="entry name" value="KH_dom_type_2"/>
</dbReference>
<dbReference type="InterPro" id="IPR009019">
    <property type="entry name" value="KH_sf_prok-type"/>
</dbReference>
<dbReference type="InterPro" id="IPR027417">
    <property type="entry name" value="P-loop_NTPase"/>
</dbReference>
<dbReference type="InterPro" id="IPR005225">
    <property type="entry name" value="Small_GTP-bd"/>
</dbReference>
<dbReference type="NCBIfam" id="TIGR00436">
    <property type="entry name" value="era"/>
    <property type="match status" value="1"/>
</dbReference>
<dbReference type="NCBIfam" id="NF000908">
    <property type="entry name" value="PRK00089.1"/>
    <property type="match status" value="1"/>
</dbReference>
<dbReference type="NCBIfam" id="TIGR00231">
    <property type="entry name" value="small_GTP"/>
    <property type="match status" value="1"/>
</dbReference>
<dbReference type="PANTHER" id="PTHR42698">
    <property type="entry name" value="GTPASE ERA"/>
    <property type="match status" value="1"/>
</dbReference>
<dbReference type="PANTHER" id="PTHR42698:SF1">
    <property type="entry name" value="GTPASE ERA, MITOCHONDRIAL"/>
    <property type="match status" value="1"/>
</dbReference>
<dbReference type="Pfam" id="PF07650">
    <property type="entry name" value="KH_2"/>
    <property type="match status" value="1"/>
</dbReference>
<dbReference type="Pfam" id="PF01926">
    <property type="entry name" value="MMR_HSR1"/>
    <property type="match status" value="1"/>
</dbReference>
<dbReference type="SUPFAM" id="SSF52540">
    <property type="entry name" value="P-loop containing nucleoside triphosphate hydrolases"/>
    <property type="match status" value="1"/>
</dbReference>
<dbReference type="SUPFAM" id="SSF54814">
    <property type="entry name" value="Prokaryotic type KH domain (KH-domain type II)"/>
    <property type="match status" value="1"/>
</dbReference>
<dbReference type="PROSITE" id="PS51713">
    <property type="entry name" value="G_ERA"/>
    <property type="match status" value="1"/>
</dbReference>
<dbReference type="PROSITE" id="PS50823">
    <property type="entry name" value="KH_TYPE_2"/>
    <property type="match status" value="1"/>
</dbReference>